<name>Y8744_DICDI</name>
<reference key="1">
    <citation type="journal article" date="2005" name="Nature">
        <title>The genome of the social amoeba Dictyostelium discoideum.</title>
        <authorList>
            <person name="Eichinger L."/>
            <person name="Pachebat J.A."/>
            <person name="Gloeckner G."/>
            <person name="Rajandream M.A."/>
            <person name="Sucgang R."/>
            <person name="Berriman M."/>
            <person name="Song J."/>
            <person name="Olsen R."/>
            <person name="Szafranski K."/>
            <person name="Xu Q."/>
            <person name="Tunggal B."/>
            <person name="Kummerfeld S."/>
            <person name="Madera M."/>
            <person name="Konfortov B.A."/>
            <person name="Rivero F."/>
            <person name="Bankier A.T."/>
            <person name="Lehmann R."/>
            <person name="Hamlin N."/>
            <person name="Davies R."/>
            <person name="Gaudet P."/>
            <person name="Fey P."/>
            <person name="Pilcher K."/>
            <person name="Chen G."/>
            <person name="Saunders D."/>
            <person name="Sodergren E.J."/>
            <person name="Davis P."/>
            <person name="Kerhornou A."/>
            <person name="Nie X."/>
            <person name="Hall N."/>
            <person name="Anjard C."/>
            <person name="Hemphill L."/>
            <person name="Bason N."/>
            <person name="Farbrother P."/>
            <person name="Desany B."/>
            <person name="Just E."/>
            <person name="Morio T."/>
            <person name="Rost R."/>
            <person name="Churcher C.M."/>
            <person name="Cooper J."/>
            <person name="Haydock S."/>
            <person name="van Driessche N."/>
            <person name="Cronin A."/>
            <person name="Goodhead I."/>
            <person name="Muzny D.M."/>
            <person name="Mourier T."/>
            <person name="Pain A."/>
            <person name="Lu M."/>
            <person name="Harper D."/>
            <person name="Lindsay R."/>
            <person name="Hauser H."/>
            <person name="James K.D."/>
            <person name="Quiles M."/>
            <person name="Madan Babu M."/>
            <person name="Saito T."/>
            <person name="Buchrieser C."/>
            <person name="Wardroper A."/>
            <person name="Felder M."/>
            <person name="Thangavelu M."/>
            <person name="Johnson D."/>
            <person name="Knights A."/>
            <person name="Loulseged H."/>
            <person name="Mungall K.L."/>
            <person name="Oliver K."/>
            <person name="Price C."/>
            <person name="Quail M.A."/>
            <person name="Urushihara H."/>
            <person name="Hernandez J."/>
            <person name="Rabbinowitsch E."/>
            <person name="Steffen D."/>
            <person name="Sanders M."/>
            <person name="Ma J."/>
            <person name="Kohara Y."/>
            <person name="Sharp S."/>
            <person name="Simmonds M.N."/>
            <person name="Spiegler S."/>
            <person name="Tivey A."/>
            <person name="Sugano S."/>
            <person name="White B."/>
            <person name="Walker D."/>
            <person name="Woodward J.R."/>
            <person name="Winckler T."/>
            <person name="Tanaka Y."/>
            <person name="Shaulsky G."/>
            <person name="Schleicher M."/>
            <person name="Weinstock G.M."/>
            <person name="Rosenthal A."/>
            <person name="Cox E.C."/>
            <person name="Chisholm R.L."/>
            <person name="Gibbs R.A."/>
            <person name="Loomis W.F."/>
            <person name="Platzer M."/>
            <person name="Kay R.R."/>
            <person name="Williams J.G."/>
            <person name="Dear P.H."/>
            <person name="Noegel A.A."/>
            <person name="Barrell B.G."/>
            <person name="Kuspa A."/>
        </authorList>
    </citation>
    <scope>NUCLEOTIDE SEQUENCE [LARGE SCALE GENOMIC DNA]</scope>
    <source>
        <strain>AX4</strain>
    </source>
</reference>
<comment type="subcellular location">
    <subcellularLocation>
        <location evidence="3">Membrane</location>
        <topology evidence="3">Single-pass membrane protein</topology>
    </subcellularLocation>
</comment>
<accession>Q54MV1</accession>
<sequence length="68" mass="8508">MYKQKKKNHPFQCKKKKKKKKKKKKKIKLLFNYFLFFNFIITTFSDDKQLGFILFHYFKIIEVIIKDN</sequence>
<gene>
    <name type="ORF">DDB_G0285787</name>
</gene>
<evidence type="ECO:0000255" key="1"/>
<evidence type="ECO:0000256" key="2">
    <source>
        <dbReference type="SAM" id="MobiDB-lite"/>
    </source>
</evidence>
<evidence type="ECO:0000305" key="3"/>
<keyword id="KW-0472">Membrane</keyword>
<keyword id="KW-1185">Reference proteome</keyword>
<keyword id="KW-0812">Transmembrane</keyword>
<keyword id="KW-1133">Transmembrane helix</keyword>
<dbReference type="EMBL" id="AAFI02000079">
    <property type="protein sequence ID" value="EAL64731.1"/>
    <property type="molecule type" value="Genomic_DNA"/>
</dbReference>
<dbReference type="RefSeq" id="XP_638192.1">
    <property type="nucleotide sequence ID" value="XM_633100.1"/>
</dbReference>
<dbReference type="SMR" id="Q54MV1"/>
<dbReference type="PaxDb" id="44689-DDB0218744"/>
<dbReference type="EnsemblProtists" id="EAL64731">
    <property type="protein sequence ID" value="EAL64731"/>
    <property type="gene ID" value="DDB_G0285787"/>
</dbReference>
<dbReference type="GeneID" id="8625238"/>
<dbReference type="KEGG" id="ddi:DDB_G0285787"/>
<dbReference type="dictyBase" id="DDB_G0285787"/>
<dbReference type="HOGENOM" id="CLU_2799322_0_0_1"/>
<dbReference type="InParanoid" id="Q54MV1"/>
<dbReference type="PRO" id="PR:Q54MV1"/>
<dbReference type="Proteomes" id="UP000002195">
    <property type="component" value="Chromosome 4"/>
</dbReference>
<dbReference type="GO" id="GO:0016020">
    <property type="term" value="C:membrane"/>
    <property type="evidence" value="ECO:0007669"/>
    <property type="project" value="UniProtKB-SubCell"/>
</dbReference>
<feature type="chain" id="PRO_0000348520" description="Putative uncharacterized transmembrane protein DDB_G0285787">
    <location>
        <begin position="1"/>
        <end position="68"/>
    </location>
</feature>
<feature type="transmembrane region" description="Helical" evidence="1">
    <location>
        <begin position="27"/>
        <end position="44"/>
    </location>
</feature>
<feature type="region of interest" description="Disordered" evidence="2">
    <location>
        <begin position="1"/>
        <end position="20"/>
    </location>
</feature>
<organism>
    <name type="scientific">Dictyostelium discoideum</name>
    <name type="common">Social amoeba</name>
    <dbReference type="NCBI Taxonomy" id="44689"/>
    <lineage>
        <taxon>Eukaryota</taxon>
        <taxon>Amoebozoa</taxon>
        <taxon>Evosea</taxon>
        <taxon>Eumycetozoa</taxon>
        <taxon>Dictyostelia</taxon>
        <taxon>Dictyosteliales</taxon>
        <taxon>Dictyosteliaceae</taxon>
        <taxon>Dictyostelium</taxon>
    </lineage>
</organism>
<proteinExistence type="predicted"/>
<protein>
    <recommendedName>
        <fullName>Putative uncharacterized transmembrane protein DDB_G0285787</fullName>
    </recommendedName>
</protein>